<comment type="function">
    <text evidence="2">Catalyzes the formation of N(7)-methylguanine at position 46 (m7G46) in tRNA.</text>
</comment>
<comment type="catalytic activity">
    <reaction evidence="2">
        <text>guanosine(46) in tRNA + S-adenosyl-L-methionine = N(7)-methylguanosine(46) in tRNA + S-adenosyl-L-homocysteine</text>
        <dbReference type="Rhea" id="RHEA:42708"/>
        <dbReference type="Rhea" id="RHEA-COMP:10188"/>
        <dbReference type="Rhea" id="RHEA-COMP:10189"/>
        <dbReference type="ChEBI" id="CHEBI:57856"/>
        <dbReference type="ChEBI" id="CHEBI:59789"/>
        <dbReference type="ChEBI" id="CHEBI:74269"/>
        <dbReference type="ChEBI" id="CHEBI:74480"/>
        <dbReference type="EC" id="2.1.1.33"/>
    </reaction>
</comment>
<comment type="pathway">
    <text evidence="2">tRNA modification; N(7)-methylguanine-tRNA biosynthesis.</text>
</comment>
<comment type="subunit">
    <text evidence="2">Monomer.</text>
</comment>
<comment type="similarity">
    <text evidence="2">Belongs to the class I-like SAM-binding methyltransferase superfamily. TrmB family.</text>
</comment>
<accession>Q32C29</accession>
<proteinExistence type="inferred from homology"/>
<organism>
    <name type="scientific">Shigella dysenteriae serotype 1 (strain Sd197)</name>
    <dbReference type="NCBI Taxonomy" id="300267"/>
    <lineage>
        <taxon>Bacteria</taxon>
        <taxon>Pseudomonadati</taxon>
        <taxon>Pseudomonadota</taxon>
        <taxon>Gammaproteobacteria</taxon>
        <taxon>Enterobacterales</taxon>
        <taxon>Enterobacteriaceae</taxon>
        <taxon>Shigella</taxon>
    </lineage>
</organism>
<keyword id="KW-0489">Methyltransferase</keyword>
<keyword id="KW-1185">Reference proteome</keyword>
<keyword id="KW-0949">S-adenosyl-L-methionine</keyword>
<keyword id="KW-0808">Transferase</keyword>
<keyword id="KW-0819">tRNA processing</keyword>
<protein>
    <recommendedName>
        <fullName evidence="2">tRNA (guanine-N(7)-)-methyltransferase</fullName>
        <ecNumber evidence="2">2.1.1.33</ecNumber>
    </recommendedName>
    <alternativeName>
        <fullName evidence="2">tRNA (guanine(46)-N(7))-methyltransferase</fullName>
    </alternativeName>
    <alternativeName>
        <fullName evidence="2">tRNA(m7G46)-methyltransferase</fullName>
    </alternativeName>
</protein>
<name>TRMB_SHIDS</name>
<sequence>MKNDVISPEFDENGRPLRRIRSFVRRQGRLTKGQEHALENYWPVMGVEFSEDMLDFPALFGREAPVTLEIGFGMGASLVAMAKDRPEQDFLGIEVHSPGVGACLASAHEEGLSNLHVMCHDAVEVLHKMIPDNSLRMVQLFFPDPWHKARHNKRRIVQVPFAELVKSKLQLGGVFHMATDWEPYAEHMLEVMSSIDGYKNLSESNDYVPRPASRPVTKFEQRGHRLGHGVWDLMFERVK</sequence>
<reference key="1">
    <citation type="journal article" date="2005" name="Nucleic Acids Res.">
        <title>Genome dynamics and diversity of Shigella species, the etiologic agents of bacillary dysentery.</title>
        <authorList>
            <person name="Yang F."/>
            <person name="Yang J."/>
            <person name="Zhang X."/>
            <person name="Chen L."/>
            <person name="Jiang Y."/>
            <person name="Yan Y."/>
            <person name="Tang X."/>
            <person name="Wang J."/>
            <person name="Xiong Z."/>
            <person name="Dong J."/>
            <person name="Xue Y."/>
            <person name="Zhu Y."/>
            <person name="Xu X."/>
            <person name="Sun L."/>
            <person name="Chen S."/>
            <person name="Nie H."/>
            <person name="Peng J."/>
            <person name="Xu J."/>
            <person name="Wang Y."/>
            <person name="Yuan Z."/>
            <person name="Wen Y."/>
            <person name="Yao Z."/>
            <person name="Shen Y."/>
            <person name="Qiang B."/>
            <person name="Hou Y."/>
            <person name="Yu J."/>
            <person name="Jin Q."/>
        </authorList>
    </citation>
    <scope>NUCLEOTIDE SEQUENCE [LARGE SCALE GENOMIC DNA]</scope>
    <source>
        <strain>Sd197</strain>
    </source>
</reference>
<dbReference type="EC" id="2.1.1.33" evidence="2"/>
<dbReference type="EMBL" id="CP000034">
    <property type="protein sequence ID" value="ABB63126.1"/>
    <property type="molecule type" value="Genomic_DNA"/>
</dbReference>
<dbReference type="RefSeq" id="WP_000786904.1">
    <property type="nucleotide sequence ID" value="NC_007606.1"/>
</dbReference>
<dbReference type="RefSeq" id="YP_404617.1">
    <property type="nucleotide sequence ID" value="NC_007606.1"/>
</dbReference>
<dbReference type="SMR" id="Q32C29"/>
<dbReference type="STRING" id="300267.SDY_3112"/>
<dbReference type="EnsemblBacteria" id="ABB63126">
    <property type="protein sequence ID" value="ABB63126"/>
    <property type="gene ID" value="SDY_3112"/>
</dbReference>
<dbReference type="KEGG" id="sdy:SDY_3112"/>
<dbReference type="PATRIC" id="fig|300267.13.peg.3721"/>
<dbReference type="HOGENOM" id="CLU_050910_0_1_6"/>
<dbReference type="UniPathway" id="UPA00989"/>
<dbReference type="Proteomes" id="UP000002716">
    <property type="component" value="Chromosome"/>
</dbReference>
<dbReference type="GO" id="GO:0043527">
    <property type="term" value="C:tRNA methyltransferase complex"/>
    <property type="evidence" value="ECO:0007669"/>
    <property type="project" value="TreeGrafter"/>
</dbReference>
<dbReference type="GO" id="GO:0008176">
    <property type="term" value="F:tRNA (guanine(46)-N7)-methyltransferase activity"/>
    <property type="evidence" value="ECO:0007669"/>
    <property type="project" value="UniProtKB-UniRule"/>
</dbReference>
<dbReference type="FunFam" id="3.40.50.150:FF:000024">
    <property type="entry name" value="tRNA (guanine-N(7)-)-methyltransferase"/>
    <property type="match status" value="1"/>
</dbReference>
<dbReference type="Gene3D" id="3.40.50.150">
    <property type="entry name" value="Vaccinia Virus protein VP39"/>
    <property type="match status" value="1"/>
</dbReference>
<dbReference type="HAMAP" id="MF_01057">
    <property type="entry name" value="tRNA_methyltr_TrmB"/>
    <property type="match status" value="1"/>
</dbReference>
<dbReference type="InterPro" id="IPR029063">
    <property type="entry name" value="SAM-dependent_MTases_sf"/>
</dbReference>
<dbReference type="InterPro" id="IPR003358">
    <property type="entry name" value="tRNA_(Gua-N-7)_MeTrfase_Trmb"/>
</dbReference>
<dbReference type="InterPro" id="IPR055361">
    <property type="entry name" value="tRNA_methyltr_TrmB_bact"/>
</dbReference>
<dbReference type="NCBIfam" id="TIGR00091">
    <property type="entry name" value="tRNA (guanosine(46)-N7)-methyltransferase TrmB"/>
    <property type="match status" value="1"/>
</dbReference>
<dbReference type="PANTHER" id="PTHR23417">
    <property type="entry name" value="3-DEOXY-D-MANNO-OCTULOSONIC-ACID TRANSFERASE/TRNA GUANINE-N 7 - -METHYLTRANSFERASE"/>
    <property type="match status" value="1"/>
</dbReference>
<dbReference type="PANTHER" id="PTHR23417:SF14">
    <property type="entry name" value="PENTACOTRIPEPTIDE-REPEAT REGION OF PRORP DOMAIN-CONTAINING PROTEIN"/>
    <property type="match status" value="1"/>
</dbReference>
<dbReference type="Pfam" id="PF02390">
    <property type="entry name" value="Methyltransf_4"/>
    <property type="match status" value="1"/>
</dbReference>
<dbReference type="SUPFAM" id="SSF53335">
    <property type="entry name" value="S-adenosyl-L-methionine-dependent methyltransferases"/>
    <property type="match status" value="1"/>
</dbReference>
<dbReference type="PROSITE" id="PS51625">
    <property type="entry name" value="SAM_MT_TRMB"/>
    <property type="match status" value="1"/>
</dbReference>
<evidence type="ECO:0000250" key="1"/>
<evidence type="ECO:0000255" key="2">
    <source>
        <dbReference type="HAMAP-Rule" id="MF_01057"/>
    </source>
</evidence>
<gene>
    <name evidence="2" type="primary">trmB</name>
    <name type="ordered locus">SDY_3112</name>
</gene>
<feature type="chain" id="PRO_0000229196" description="tRNA (guanine-N(7)-)-methyltransferase">
    <location>
        <begin position="1"/>
        <end position="239"/>
    </location>
</feature>
<feature type="region of interest" description="Interaction with RNA" evidence="2">
    <location>
        <begin position="150"/>
        <end position="155"/>
    </location>
</feature>
<feature type="active site" evidence="1">
    <location>
        <position position="144"/>
    </location>
</feature>
<feature type="binding site" evidence="2">
    <location>
        <position position="69"/>
    </location>
    <ligand>
        <name>S-adenosyl-L-methionine</name>
        <dbReference type="ChEBI" id="CHEBI:59789"/>
    </ligand>
</feature>
<feature type="binding site" evidence="2">
    <location>
        <position position="94"/>
    </location>
    <ligand>
        <name>S-adenosyl-L-methionine</name>
        <dbReference type="ChEBI" id="CHEBI:59789"/>
    </ligand>
</feature>
<feature type="binding site" evidence="2">
    <location>
        <position position="121"/>
    </location>
    <ligand>
        <name>S-adenosyl-L-methionine</name>
        <dbReference type="ChEBI" id="CHEBI:59789"/>
    </ligand>
</feature>
<feature type="binding site" evidence="2">
    <location>
        <position position="144"/>
    </location>
    <ligand>
        <name>S-adenosyl-L-methionine</name>
        <dbReference type="ChEBI" id="CHEBI:59789"/>
    </ligand>
</feature>
<feature type="binding site" evidence="2">
    <location>
        <position position="148"/>
    </location>
    <ligand>
        <name>substrate</name>
    </ligand>
</feature>
<feature type="binding site" evidence="2">
    <location>
        <position position="180"/>
    </location>
    <ligand>
        <name>substrate</name>
    </ligand>
</feature>
<feature type="binding site" evidence="2">
    <location>
        <begin position="217"/>
        <end position="220"/>
    </location>
    <ligand>
        <name>substrate</name>
    </ligand>
</feature>